<dbReference type="EMBL" id="AK291344">
    <property type="protein sequence ID" value="BAF84033.1"/>
    <property type="molecule type" value="mRNA"/>
</dbReference>
<dbReference type="EMBL" id="AC012476">
    <property type="status" value="NOT_ANNOTATED_CDS"/>
    <property type="molecule type" value="Genomic_DNA"/>
</dbReference>
<dbReference type="CCDS" id="CCDS45229.1"/>
<dbReference type="RefSeq" id="NP_001123920.1">
    <property type="nucleotide sequence ID" value="NM_001130448.3"/>
</dbReference>
<dbReference type="SMR" id="A8K5M9"/>
<dbReference type="BioGRID" id="568694">
    <property type="interactions" value="1"/>
</dbReference>
<dbReference type="FunCoup" id="A8K5M9">
    <property type="interactions" value="61"/>
</dbReference>
<dbReference type="IntAct" id="A8K5M9">
    <property type="interactions" value="1"/>
</dbReference>
<dbReference type="STRING" id="9606.ENSP00000341178"/>
<dbReference type="iPTMnet" id="A8K5M9"/>
<dbReference type="PhosphoSitePlus" id="A8K5M9"/>
<dbReference type="BioMuta" id="C15orf62"/>
<dbReference type="jPOST" id="A8K5M9"/>
<dbReference type="MassIVE" id="A8K5M9"/>
<dbReference type="PaxDb" id="9606-ENSP00000341178"/>
<dbReference type="PeptideAtlas" id="A8K5M9"/>
<dbReference type="ProteomicsDB" id="1865"/>
<dbReference type="Antibodypedia" id="49844">
    <property type="antibodies" value="9 antibodies from 7 providers"/>
</dbReference>
<dbReference type="DNASU" id="643338"/>
<dbReference type="Ensembl" id="ENST00000344320.8">
    <property type="protein sequence ID" value="ENSP00000341178.6"/>
    <property type="gene ID" value="ENSG00000188277.10"/>
</dbReference>
<dbReference type="GeneID" id="643338"/>
<dbReference type="KEGG" id="hsa:643338"/>
<dbReference type="MANE-Select" id="ENST00000344320.8">
    <property type="protein sequence ID" value="ENSP00000341178.6"/>
    <property type="RefSeq nucleotide sequence ID" value="NM_001130448.3"/>
    <property type="RefSeq protein sequence ID" value="NP_001123920.1"/>
</dbReference>
<dbReference type="UCSC" id="uc010bby.5">
    <property type="organism name" value="human"/>
</dbReference>
<dbReference type="AGR" id="HGNC:34489"/>
<dbReference type="CTD" id="643338"/>
<dbReference type="GeneCards" id="C15orf62"/>
<dbReference type="HGNC" id="HGNC:34489">
    <property type="gene designation" value="C15orf62"/>
</dbReference>
<dbReference type="HPA" id="ENSG00000188277">
    <property type="expression patterns" value="Tissue enhanced (esophagus, skin)"/>
</dbReference>
<dbReference type="neXtProt" id="NX_A8K5M9"/>
<dbReference type="OpenTargets" id="ENSG00000188277"/>
<dbReference type="PharmGKB" id="PA162378296"/>
<dbReference type="VEuPathDB" id="HostDB:ENSG00000188277"/>
<dbReference type="eggNOG" id="ENOG502S89I">
    <property type="taxonomic scope" value="Eukaryota"/>
</dbReference>
<dbReference type="GeneTree" id="ENSGT00390000007057"/>
<dbReference type="HOGENOM" id="CLU_1488562_0_0_1"/>
<dbReference type="InParanoid" id="A8K5M9"/>
<dbReference type="OMA" id="HKKLGNQ"/>
<dbReference type="OrthoDB" id="9447768at2759"/>
<dbReference type="PAN-GO" id="A8K5M9">
    <property type="GO annotations" value="7 GO annotations based on evolutionary models"/>
</dbReference>
<dbReference type="PhylomeDB" id="A8K5M9"/>
<dbReference type="TreeFam" id="TF336081"/>
<dbReference type="PathwayCommons" id="A8K5M9"/>
<dbReference type="BioGRID-ORCS" id="643338">
    <property type="hits" value="11 hits in 1117 CRISPR screens"/>
</dbReference>
<dbReference type="ChiTaRS" id="C15orf62">
    <property type="organism name" value="human"/>
</dbReference>
<dbReference type="GenomeRNAi" id="643338"/>
<dbReference type="Pharos" id="A8K5M9">
    <property type="development level" value="Tdark"/>
</dbReference>
<dbReference type="PRO" id="PR:A8K5M9"/>
<dbReference type="Proteomes" id="UP000005640">
    <property type="component" value="Chromosome 15"/>
</dbReference>
<dbReference type="RNAct" id="A8K5M9">
    <property type="molecule type" value="protein"/>
</dbReference>
<dbReference type="Bgee" id="ENSG00000188277">
    <property type="expression patterns" value="Expressed in lower esophagus mucosa and 109 other cell types or tissues"/>
</dbReference>
<dbReference type="GO" id="GO:0005737">
    <property type="term" value="C:cytoplasm"/>
    <property type="evidence" value="ECO:0000318"/>
    <property type="project" value="GO_Central"/>
</dbReference>
<dbReference type="GO" id="GO:0005856">
    <property type="term" value="C:cytoskeleton"/>
    <property type="evidence" value="ECO:0000318"/>
    <property type="project" value="GO_Central"/>
</dbReference>
<dbReference type="GO" id="GO:0005739">
    <property type="term" value="C:mitochondrion"/>
    <property type="evidence" value="ECO:0006056"/>
    <property type="project" value="FlyBase"/>
</dbReference>
<dbReference type="GO" id="GO:0005886">
    <property type="term" value="C:plasma membrane"/>
    <property type="evidence" value="ECO:0000318"/>
    <property type="project" value="GO_Central"/>
</dbReference>
<dbReference type="GO" id="GO:0031267">
    <property type="term" value="F:small GTPase binding"/>
    <property type="evidence" value="ECO:0000318"/>
    <property type="project" value="GO_Central"/>
</dbReference>
<dbReference type="GO" id="GO:0030838">
    <property type="term" value="P:positive regulation of actin filament polymerization"/>
    <property type="evidence" value="ECO:0000318"/>
    <property type="project" value="GO_Central"/>
</dbReference>
<dbReference type="GO" id="GO:0031274">
    <property type="term" value="P:positive regulation of pseudopodium assembly"/>
    <property type="evidence" value="ECO:0000318"/>
    <property type="project" value="GO_Central"/>
</dbReference>
<dbReference type="GO" id="GO:0008360">
    <property type="term" value="P:regulation of cell shape"/>
    <property type="evidence" value="ECO:0000318"/>
    <property type="project" value="GO_Central"/>
</dbReference>
<dbReference type="GO" id="GO:0007266">
    <property type="term" value="P:Rho protein signal transduction"/>
    <property type="evidence" value="ECO:0000318"/>
    <property type="project" value="GO_Central"/>
</dbReference>
<dbReference type="InterPro" id="IPR051296">
    <property type="entry name" value="Cdc42_Effector_BORG/CEP"/>
</dbReference>
<dbReference type="PANTHER" id="PTHR15344">
    <property type="entry name" value="CDC42 EFFECTOR PROTEIN BORG"/>
    <property type="match status" value="1"/>
</dbReference>
<dbReference type="PANTHER" id="PTHR15344:SF8">
    <property type="entry name" value="GENE 14137-RELATED"/>
    <property type="match status" value="1"/>
</dbReference>
<gene>
    <name type="primary">C15orf62</name>
</gene>
<evidence type="ECO:0000255" key="1"/>
<evidence type="ECO:0000256" key="2">
    <source>
        <dbReference type="SAM" id="MobiDB-lite"/>
    </source>
</evidence>
<evidence type="ECO:0000305" key="3"/>
<keyword id="KW-0496">Mitochondrion</keyword>
<keyword id="KW-1267">Proteomics identification</keyword>
<keyword id="KW-1185">Reference proteome</keyword>
<keyword id="KW-0809">Transit peptide</keyword>
<comment type="subcellular location">
    <subcellularLocation>
        <location evidence="3">Mitochondrion</location>
    </subcellularLocation>
</comment>
<organism>
    <name type="scientific">Homo sapiens</name>
    <name type="common">Human</name>
    <dbReference type="NCBI Taxonomy" id="9606"/>
    <lineage>
        <taxon>Eukaryota</taxon>
        <taxon>Metazoa</taxon>
        <taxon>Chordata</taxon>
        <taxon>Craniata</taxon>
        <taxon>Vertebrata</taxon>
        <taxon>Euteleostomi</taxon>
        <taxon>Mammalia</taxon>
        <taxon>Eutheria</taxon>
        <taxon>Euarchontoglires</taxon>
        <taxon>Primates</taxon>
        <taxon>Haplorrhini</taxon>
        <taxon>Catarrhini</taxon>
        <taxon>Hominidae</taxon>
        <taxon>Homo</taxon>
    </lineage>
</organism>
<sequence>METWRKGSFRNASFFKQLSLGRPRRLRRQSSVLSQASTAGGDHEEYSNREVIRELQGRPDGRRLPLWGDEQPRATLLAPPKPPRLYRESSSCPNILEPPPAYTAAYSATLPSALSLSSALHQHSEKGLVDTPCFQRTPTPDLSDPFLSFKVDLGISLLEEVLQMLREQFPSEPSF</sequence>
<accession>A8K5M9</accession>
<accession>A6NK01</accession>
<feature type="transit peptide" description="Mitochondrion" evidence="1">
    <location>
        <begin position="1"/>
        <end position="11"/>
    </location>
</feature>
<feature type="chain" id="PRO_0000332136" description="Uncharacterized protein C15orf62, mitochondrial">
    <location>
        <begin position="12"/>
        <end position="175"/>
    </location>
</feature>
<feature type="region of interest" description="Disordered" evidence="2">
    <location>
        <begin position="24"/>
        <end position="92"/>
    </location>
</feature>
<feature type="compositionally biased region" description="Basic and acidic residues" evidence="2">
    <location>
        <begin position="41"/>
        <end position="63"/>
    </location>
</feature>
<name>CO062_HUMAN</name>
<proteinExistence type="evidence at protein level"/>
<reference key="1">
    <citation type="journal article" date="2004" name="Nat. Genet.">
        <title>Complete sequencing and characterization of 21,243 full-length human cDNAs.</title>
        <authorList>
            <person name="Ota T."/>
            <person name="Suzuki Y."/>
            <person name="Nishikawa T."/>
            <person name="Otsuki T."/>
            <person name="Sugiyama T."/>
            <person name="Irie R."/>
            <person name="Wakamatsu A."/>
            <person name="Hayashi K."/>
            <person name="Sato H."/>
            <person name="Nagai K."/>
            <person name="Kimura K."/>
            <person name="Makita H."/>
            <person name="Sekine M."/>
            <person name="Obayashi M."/>
            <person name="Nishi T."/>
            <person name="Shibahara T."/>
            <person name="Tanaka T."/>
            <person name="Ishii S."/>
            <person name="Yamamoto J."/>
            <person name="Saito K."/>
            <person name="Kawai Y."/>
            <person name="Isono Y."/>
            <person name="Nakamura Y."/>
            <person name="Nagahari K."/>
            <person name="Murakami K."/>
            <person name="Yasuda T."/>
            <person name="Iwayanagi T."/>
            <person name="Wagatsuma M."/>
            <person name="Shiratori A."/>
            <person name="Sudo H."/>
            <person name="Hosoiri T."/>
            <person name="Kaku Y."/>
            <person name="Kodaira H."/>
            <person name="Kondo H."/>
            <person name="Sugawara M."/>
            <person name="Takahashi M."/>
            <person name="Kanda K."/>
            <person name="Yokoi T."/>
            <person name="Furuya T."/>
            <person name="Kikkawa E."/>
            <person name="Omura Y."/>
            <person name="Abe K."/>
            <person name="Kamihara K."/>
            <person name="Katsuta N."/>
            <person name="Sato K."/>
            <person name="Tanikawa M."/>
            <person name="Yamazaki M."/>
            <person name="Ninomiya K."/>
            <person name="Ishibashi T."/>
            <person name="Yamashita H."/>
            <person name="Murakawa K."/>
            <person name="Fujimori K."/>
            <person name="Tanai H."/>
            <person name="Kimata M."/>
            <person name="Watanabe M."/>
            <person name="Hiraoka S."/>
            <person name="Chiba Y."/>
            <person name="Ishida S."/>
            <person name="Ono Y."/>
            <person name="Takiguchi S."/>
            <person name="Watanabe S."/>
            <person name="Yosida M."/>
            <person name="Hotuta T."/>
            <person name="Kusano J."/>
            <person name="Kanehori K."/>
            <person name="Takahashi-Fujii A."/>
            <person name="Hara H."/>
            <person name="Tanase T.-O."/>
            <person name="Nomura Y."/>
            <person name="Togiya S."/>
            <person name="Komai F."/>
            <person name="Hara R."/>
            <person name="Takeuchi K."/>
            <person name="Arita M."/>
            <person name="Imose N."/>
            <person name="Musashino K."/>
            <person name="Yuuki H."/>
            <person name="Oshima A."/>
            <person name="Sasaki N."/>
            <person name="Aotsuka S."/>
            <person name="Yoshikawa Y."/>
            <person name="Matsunawa H."/>
            <person name="Ichihara T."/>
            <person name="Shiohata N."/>
            <person name="Sano S."/>
            <person name="Moriya S."/>
            <person name="Momiyama H."/>
            <person name="Satoh N."/>
            <person name="Takami S."/>
            <person name="Terashima Y."/>
            <person name="Suzuki O."/>
            <person name="Nakagawa S."/>
            <person name="Senoh A."/>
            <person name="Mizoguchi H."/>
            <person name="Goto Y."/>
            <person name="Shimizu F."/>
            <person name="Wakebe H."/>
            <person name="Hishigaki H."/>
            <person name="Watanabe T."/>
            <person name="Sugiyama A."/>
            <person name="Takemoto M."/>
            <person name="Kawakami B."/>
            <person name="Yamazaki M."/>
            <person name="Watanabe K."/>
            <person name="Kumagai A."/>
            <person name="Itakura S."/>
            <person name="Fukuzumi Y."/>
            <person name="Fujimori Y."/>
            <person name="Komiyama M."/>
            <person name="Tashiro H."/>
            <person name="Tanigami A."/>
            <person name="Fujiwara T."/>
            <person name="Ono T."/>
            <person name="Yamada K."/>
            <person name="Fujii Y."/>
            <person name="Ozaki K."/>
            <person name="Hirao M."/>
            <person name="Ohmori Y."/>
            <person name="Kawabata A."/>
            <person name="Hikiji T."/>
            <person name="Kobatake N."/>
            <person name="Inagaki H."/>
            <person name="Ikema Y."/>
            <person name="Okamoto S."/>
            <person name="Okitani R."/>
            <person name="Kawakami T."/>
            <person name="Noguchi S."/>
            <person name="Itoh T."/>
            <person name="Shigeta K."/>
            <person name="Senba T."/>
            <person name="Matsumura K."/>
            <person name="Nakajima Y."/>
            <person name="Mizuno T."/>
            <person name="Morinaga M."/>
            <person name="Sasaki M."/>
            <person name="Togashi T."/>
            <person name="Oyama M."/>
            <person name="Hata H."/>
            <person name="Watanabe M."/>
            <person name="Komatsu T."/>
            <person name="Mizushima-Sugano J."/>
            <person name="Satoh T."/>
            <person name="Shirai Y."/>
            <person name="Takahashi Y."/>
            <person name="Nakagawa K."/>
            <person name="Okumura K."/>
            <person name="Nagase T."/>
            <person name="Nomura N."/>
            <person name="Kikuchi H."/>
            <person name="Masuho Y."/>
            <person name="Yamashita R."/>
            <person name="Nakai K."/>
            <person name="Yada T."/>
            <person name="Nakamura Y."/>
            <person name="Ohara O."/>
            <person name="Isogai T."/>
            <person name="Sugano S."/>
        </authorList>
    </citation>
    <scope>NUCLEOTIDE SEQUENCE [LARGE SCALE MRNA]</scope>
    <source>
        <tissue>Tongue</tissue>
    </source>
</reference>
<reference key="2">
    <citation type="journal article" date="2006" name="Nature">
        <title>Analysis of the DNA sequence and duplication history of human chromosome 15.</title>
        <authorList>
            <person name="Zody M.C."/>
            <person name="Garber M."/>
            <person name="Sharpe T."/>
            <person name="Young S.K."/>
            <person name="Rowen L."/>
            <person name="O'Neill K."/>
            <person name="Whittaker C.A."/>
            <person name="Kamal M."/>
            <person name="Chang J.L."/>
            <person name="Cuomo C.A."/>
            <person name="Dewar K."/>
            <person name="FitzGerald M.G."/>
            <person name="Kodira C.D."/>
            <person name="Madan A."/>
            <person name="Qin S."/>
            <person name="Yang X."/>
            <person name="Abbasi N."/>
            <person name="Abouelleil A."/>
            <person name="Arachchi H.M."/>
            <person name="Baradarani L."/>
            <person name="Birditt B."/>
            <person name="Bloom S."/>
            <person name="Bloom T."/>
            <person name="Borowsky M.L."/>
            <person name="Burke J."/>
            <person name="Butler J."/>
            <person name="Cook A."/>
            <person name="DeArellano K."/>
            <person name="DeCaprio D."/>
            <person name="Dorris L. III"/>
            <person name="Dors M."/>
            <person name="Eichler E.E."/>
            <person name="Engels R."/>
            <person name="Fahey J."/>
            <person name="Fleetwood P."/>
            <person name="Friedman C."/>
            <person name="Gearin G."/>
            <person name="Hall J.L."/>
            <person name="Hensley G."/>
            <person name="Johnson E."/>
            <person name="Jones C."/>
            <person name="Kamat A."/>
            <person name="Kaur A."/>
            <person name="Locke D.P."/>
            <person name="Madan A."/>
            <person name="Munson G."/>
            <person name="Jaffe D.B."/>
            <person name="Lui A."/>
            <person name="Macdonald P."/>
            <person name="Mauceli E."/>
            <person name="Naylor J.W."/>
            <person name="Nesbitt R."/>
            <person name="Nicol R."/>
            <person name="O'Leary S.B."/>
            <person name="Ratcliffe A."/>
            <person name="Rounsley S."/>
            <person name="She X."/>
            <person name="Sneddon K.M.B."/>
            <person name="Stewart S."/>
            <person name="Sougnez C."/>
            <person name="Stone S.M."/>
            <person name="Topham K."/>
            <person name="Vincent D."/>
            <person name="Wang S."/>
            <person name="Zimmer A.R."/>
            <person name="Birren B.W."/>
            <person name="Hood L."/>
            <person name="Lander E.S."/>
            <person name="Nusbaum C."/>
        </authorList>
    </citation>
    <scope>NUCLEOTIDE SEQUENCE [LARGE SCALE GENOMIC DNA]</scope>
</reference>
<protein>
    <recommendedName>
        <fullName>Uncharacterized protein C15orf62, mitochondrial</fullName>
    </recommendedName>
</protein>